<keyword id="KW-0256">Endoplasmic reticulum</keyword>
<keyword id="KW-0378">Hydrolase</keyword>
<keyword id="KW-0539">Nucleus</keyword>
<keyword id="KW-0645">Protease</keyword>
<keyword id="KW-1185">Reference proteome</keyword>
<keyword id="KW-0788">Thiol protease</keyword>
<keyword id="KW-0833">Ubl conjugation pathway</keyword>
<sequence>MEDDSLYLGGEWQFNHFSKLTSSRPDAAFAEIQRTSLPEKSPLSCETRVDLCDDLAPVARQLAPREKLPLSSRRPAAVGAGLQNMGNTCYVNASLQCLTYTPPLANYMLSREHSQTCHRHKGCMLCTMQAHITRALHNPGHVIQPSQALAAGFHRGKQEDAHEFLMFTVDAMKKACLPGHKQVDHHSKDTTLIHQIFGGYWRSQIKCLHCHGISDTFDPYLDIALDIQAAQSVQQALEQLVKPEELNGENAYHCGVCLQRAPASKTLTLHTSAKVLILVLKRFSDVTGNKIAKNVQYPECLDMQPYMSQTNTGPLVYVLYAVLVHAGWSCHNGHYFSYVKAQEGQWYKMDDAEVTASSITSVLSQQAYVLFYIQKSEWERHSESVSRGREPRALGAEDTDRRATQGELKRDHPCLQAPELDEHLVERATQESTLDHWKFLQEQNKTKPEFNVRKVEGTLPPDVLVIHQSKYKCGMKNHHPEQQSSLLNLSSTTPTHQESMNTGTLASLRGRARRSKGKNKHSKRALLVCQ</sequence>
<proteinExistence type="inferred from homology"/>
<name>U17LB_HUMAN</name>
<feature type="chain" id="PRO_0000421087" description="Ubiquitin carboxyl-terminal hydrolase 17-like protein 11">
    <location>
        <begin position="1"/>
        <end position="530"/>
    </location>
</feature>
<feature type="domain" description="USP">
    <location>
        <begin position="80"/>
        <end position="375"/>
    </location>
</feature>
<feature type="region of interest" description="Disordered" evidence="4">
    <location>
        <begin position="382"/>
        <end position="413"/>
    </location>
</feature>
<feature type="region of interest" description="Disordered" evidence="4">
    <location>
        <begin position="509"/>
        <end position="530"/>
    </location>
</feature>
<feature type="compositionally biased region" description="Basic and acidic residues" evidence="4">
    <location>
        <begin position="382"/>
        <end position="392"/>
    </location>
</feature>
<feature type="compositionally biased region" description="Basic and acidic residues" evidence="4">
    <location>
        <begin position="398"/>
        <end position="413"/>
    </location>
</feature>
<feature type="compositionally biased region" description="Basic residues" evidence="4">
    <location>
        <begin position="510"/>
        <end position="524"/>
    </location>
</feature>
<feature type="active site" description="Nucleophile" evidence="2 3">
    <location>
        <position position="89"/>
    </location>
</feature>
<feature type="active site" description="Proton acceptor" evidence="2 3">
    <location>
        <position position="334"/>
    </location>
</feature>
<reference key="1">
    <citation type="journal article" date="2005" name="Nature">
        <title>Generation and annotation of the DNA sequences of human chromosomes 2 and 4.</title>
        <authorList>
            <person name="Hillier L.W."/>
            <person name="Graves T.A."/>
            <person name="Fulton R.S."/>
            <person name="Fulton L.A."/>
            <person name="Pepin K.H."/>
            <person name="Minx P."/>
            <person name="Wagner-McPherson C."/>
            <person name="Layman D."/>
            <person name="Wylie K."/>
            <person name="Sekhon M."/>
            <person name="Becker M.C."/>
            <person name="Fewell G.A."/>
            <person name="Delehaunty K.D."/>
            <person name="Miner T.L."/>
            <person name="Nash W.E."/>
            <person name="Kremitzki C."/>
            <person name="Oddy L."/>
            <person name="Du H."/>
            <person name="Sun H."/>
            <person name="Bradshaw-Cordum H."/>
            <person name="Ali J."/>
            <person name="Carter J."/>
            <person name="Cordes M."/>
            <person name="Harris A."/>
            <person name="Isak A."/>
            <person name="van Brunt A."/>
            <person name="Nguyen C."/>
            <person name="Du F."/>
            <person name="Courtney L."/>
            <person name="Kalicki J."/>
            <person name="Ozersky P."/>
            <person name="Abbott S."/>
            <person name="Armstrong J."/>
            <person name="Belter E.A."/>
            <person name="Caruso L."/>
            <person name="Cedroni M."/>
            <person name="Cotton M."/>
            <person name="Davidson T."/>
            <person name="Desai A."/>
            <person name="Elliott G."/>
            <person name="Erb T."/>
            <person name="Fronick C."/>
            <person name="Gaige T."/>
            <person name="Haakenson W."/>
            <person name="Haglund K."/>
            <person name="Holmes A."/>
            <person name="Harkins R."/>
            <person name="Kim K."/>
            <person name="Kruchowski S.S."/>
            <person name="Strong C.M."/>
            <person name="Grewal N."/>
            <person name="Goyea E."/>
            <person name="Hou S."/>
            <person name="Levy A."/>
            <person name="Martinka S."/>
            <person name="Mead K."/>
            <person name="McLellan M.D."/>
            <person name="Meyer R."/>
            <person name="Randall-Maher J."/>
            <person name="Tomlinson C."/>
            <person name="Dauphin-Kohlberg S."/>
            <person name="Kozlowicz-Reilly A."/>
            <person name="Shah N."/>
            <person name="Swearengen-Shahid S."/>
            <person name="Snider J."/>
            <person name="Strong J.T."/>
            <person name="Thompson J."/>
            <person name="Yoakum M."/>
            <person name="Leonard S."/>
            <person name="Pearman C."/>
            <person name="Trani L."/>
            <person name="Radionenko M."/>
            <person name="Waligorski J.E."/>
            <person name="Wang C."/>
            <person name="Rock S.M."/>
            <person name="Tin-Wollam A.-M."/>
            <person name="Maupin R."/>
            <person name="Latreille P."/>
            <person name="Wendl M.C."/>
            <person name="Yang S.-P."/>
            <person name="Pohl C."/>
            <person name="Wallis J.W."/>
            <person name="Spieth J."/>
            <person name="Bieri T.A."/>
            <person name="Berkowicz N."/>
            <person name="Nelson J.O."/>
            <person name="Osborne J."/>
            <person name="Ding L."/>
            <person name="Meyer R."/>
            <person name="Sabo A."/>
            <person name="Shotland Y."/>
            <person name="Sinha P."/>
            <person name="Wohldmann P.E."/>
            <person name="Cook L.L."/>
            <person name="Hickenbotham M.T."/>
            <person name="Eldred J."/>
            <person name="Williams D."/>
            <person name="Jones T.A."/>
            <person name="She X."/>
            <person name="Ciccarelli F.D."/>
            <person name="Izaurralde E."/>
            <person name="Taylor J."/>
            <person name="Schmutz J."/>
            <person name="Myers R.M."/>
            <person name="Cox D.R."/>
            <person name="Huang X."/>
            <person name="McPherson J.D."/>
            <person name="Mardis E.R."/>
            <person name="Clifton S.W."/>
            <person name="Warren W.C."/>
            <person name="Chinwalla A.T."/>
            <person name="Eddy S.R."/>
            <person name="Marra M.A."/>
            <person name="Ovcharenko I."/>
            <person name="Furey T.S."/>
            <person name="Miller W."/>
            <person name="Eichler E.E."/>
            <person name="Bork P."/>
            <person name="Suyama M."/>
            <person name="Torrents D."/>
            <person name="Waterston R.H."/>
            <person name="Wilson R.K."/>
        </authorList>
    </citation>
    <scope>NUCLEOTIDE SEQUENCE [LARGE SCALE GENOMIC DNA]</scope>
</reference>
<dbReference type="EC" id="3.4.19.12"/>
<dbReference type="EMBL" id="AC108519">
    <property type="status" value="NOT_ANNOTATED_CDS"/>
    <property type="molecule type" value="Genomic_DNA"/>
</dbReference>
<dbReference type="CCDS" id="CCDS59455.1"/>
<dbReference type="RefSeq" id="NP_001243783.1">
    <property type="nucleotide sequence ID" value="NM_001256854.1"/>
</dbReference>
<dbReference type="SMR" id="C9JVI0"/>
<dbReference type="BioGRID" id="938840">
    <property type="interactions" value="1"/>
</dbReference>
<dbReference type="FunCoup" id="C9JVI0">
    <property type="interactions" value="59"/>
</dbReference>
<dbReference type="IntAct" id="C9JVI0">
    <property type="interactions" value="1"/>
</dbReference>
<dbReference type="STRING" id="9606.ENSP00000400880"/>
<dbReference type="MEROPS" id="C19.A82"/>
<dbReference type="MEROPS" id="C19.A89"/>
<dbReference type="BioMuta" id="USP17L11"/>
<dbReference type="jPOST" id="C9JVI0"/>
<dbReference type="MassIVE" id="C9JVI0"/>
<dbReference type="PaxDb" id="9606-ENSP00000400880"/>
<dbReference type="Antibodypedia" id="78085">
    <property type="antibodies" value="3 antibodies from 1 providers"/>
</dbReference>
<dbReference type="DNASU" id="100287178"/>
<dbReference type="Ensembl" id="ENST00000457736.1">
    <property type="protein sequence ID" value="ENSP00000400880.1"/>
    <property type="gene ID" value="ENSG00000233136.3"/>
</dbReference>
<dbReference type="GeneID" id="100287178"/>
<dbReference type="KEGG" id="hsa:100287178"/>
<dbReference type="MANE-Select" id="ENST00000457736.1">
    <property type="protein sequence ID" value="ENSP00000400880.1"/>
    <property type="RefSeq nucleotide sequence ID" value="NM_001256854.1"/>
    <property type="RefSeq protein sequence ID" value="NP_001243783.1"/>
</dbReference>
<dbReference type="UCSC" id="uc031sdh.1">
    <property type="organism name" value="human"/>
</dbReference>
<dbReference type="AGR" id="HGNC:44439"/>
<dbReference type="CTD" id="100287178"/>
<dbReference type="GeneCards" id="USP17L11"/>
<dbReference type="HGNC" id="HGNC:44439">
    <property type="gene designation" value="USP17L11"/>
</dbReference>
<dbReference type="HPA" id="ENSG00000233136">
    <property type="expression patterns" value="Not detected"/>
</dbReference>
<dbReference type="neXtProt" id="NX_C9JVI0"/>
<dbReference type="VEuPathDB" id="HostDB:ENSG00000233136"/>
<dbReference type="eggNOG" id="KOG1865">
    <property type="taxonomic scope" value="Eukaryota"/>
</dbReference>
<dbReference type="GeneTree" id="ENSGT00940000161948"/>
<dbReference type="InParanoid" id="C9JVI0"/>
<dbReference type="OMA" id="ENAYHCN"/>
<dbReference type="OrthoDB" id="9523253at2759"/>
<dbReference type="PAN-GO" id="C9JVI0">
    <property type="GO annotations" value="6 GO annotations based on evolutionary models"/>
</dbReference>
<dbReference type="PhylomeDB" id="C9JVI0"/>
<dbReference type="TreeFam" id="TF315281"/>
<dbReference type="PathwayCommons" id="C9JVI0"/>
<dbReference type="Reactome" id="R-HSA-5689880">
    <property type="pathway name" value="Ub-specific processing proteases"/>
</dbReference>
<dbReference type="SignaLink" id="C9JVI0"/>
<dbReference type="BioGRID-ORCS" id="100287178">
    <property type="hits" value="18 hits in 201 CRISPR screens"/>
</dbReference>
<dbReference type="GenomeRNAi" id="100287178"/>
<dbReference type="Pharos" id="C9JVI0">
    <property type="development level" value="Tdark"/>
</dbReference>
<dbReference type="PRO" id="PR:C9JVI0"/>
<dbReference type="Proteomes" id="UP000005640">
    <property type="component" value="Chromosome 4"/>
</dbReference>
<dbReference type="RNAct" id="C9JVI0">
    <property type="molecule type" value="protein"/>
</dbReference>
<dbReference type="Bgee" id="ENSG00000233136">
    <property type="expression patterns" value="Expressed in urinary bladder and 28 other cell types or tissues"/>
</dbReference>
<dbReference type="GO" id="GO:0005829">
    <property type="term" value="C:cytosol"/>
    <property type="evidence" value="ECO:0000318"/>
    <property type="project" value="GO_Central"/>
</dbReference>
<dbReference type="GO" id="GO:0005783">
    <property type="term" value="C:endoplasmic reticulum"/>
    <property type="evidence" value="ECO:0007669"/>
    <property type="project" value="UniProtKB-SubCell"/>
</dbReference>
<dbReference type="GO" id="GO:0005634">
    <property type="term" value="C:nucleus"/>
    <property type="evidence" value="ECO:0000318"/>
    <property type="project" value="GO_Central"/>
</dbReference>
<dbReference type="GO" id="GO:0004843">
    <property type="term" value="F:cysteine-type deubiquitinase activity"/>
    <property type="evidence" value="ECO:0000318"/>
    <property type="project" value="GO_Central"/>
</dbReference>
<dbReference type="GO" id="GO:0016579">
    <property type="term" value="P:protein deubiquitination"/>
    <property type="evidence" value="ECO:0007669"/>
    <property type="project" value="InterPro"/>
</dbReference>
<dbReference type="GO" id="GO:0006508">
    <property type="term" value="P:proteolysis"/>
    <property type="evidence" value="ECO:0007669"/>
    <property type="project" value="UniProtKB-KW"/>
</dbReference>
<dbReference type="GO" id="GO:0042981">
    <property type="term" value="P:regulation of apoptotic process"/>
    <property type="evidence" value="ECO:0000318"/>
    <property type="project" value="GO_Central"/>
</dbReference>
<dbReference type="GO" id="GO:0031647">
    <property type="term" value="P:regulation of protein stability"/>
    <property type="evidence" value="ECO:0000318"/>
    <property type="project" value="GO_Central"/>
</dbReference>
<dbReference type="CDD" id="cd02661">
    <property type="entry name" value="Peptidase_C19E"/>
    <property type="match status" value="1"/>
</dbReference>
<dbReference type="FunFam" id="3.90.70.10:FF:000070">
    <property type="entry name" value="Ubiquitin carboxyl-terminal hydrolase 17-like protein 17"/>
    <property type="match status" value="1"/>
</dbReference>
<dbReference type="Gene3D" id="3.90.70.10">
    <property type="entry name" value="Cysteine proteinases"/>
    <property type="match status" value="1"/>
</dbReference>
<dbReference type="InterPro" id="IPR006861">
    <property type="entry name" value="HABP4_PAIRBP1-bd"/>
</dbReference>
<dbReference type="InterPro" id="IPR038765">
    <property type="entry name" value="Papain-like_cys_pep_sf"/>
</dbReference>
<dbReference type="InterPro" id="IPR050164">
    <property type="entry name" value="Peptidase_C19"/>
</dbReference>
<dbReference type="InterPro" id="IPR001394">
    <property type="entry name" value="Peptidase_C19_UCH"/>
</dbReference>
<dbReference type="InterPro" id="IPR018200">
    <property type="entry name" value="USP_CS"/>
</dbReference>
<dbReference type="InterPro" id="IPR028889">
    <property type="entry name" value="USP_dom"/>
</dbReference>
<dbReference type="PANTHER" id="PTHR24006:SF651">
    <property type="entry name" value="INACTIVE UBIQUITIN CARBOXYL-TERMINAL HYDROLASE 17-LIKE PROTEIN 4-RELATED"/>
    <property type="match status" value="1"/>
</dbReference>
<dbReference type="PANTHER" id="PTHR24006">
    <property type="entry name" value="UBIQUITIN CARBOXYL-TERMINAL HYDROLASE"/>
    <property type="match status" value="1"/>
</dbReference>
<dbReference type="Pfam" id="PF04774">
    <property type="entry name" value="HABP4_PAI-RBP1"/>
    <property type="match status" value="1"/>
</dbReference>
<dbReference type="Pfam" id="PF00443">
    <property type="entry name" value="UCH"/>
    <property type="match status" value="1"/>
</dbReference>
<dbReference type="SUPFAM" id="SSF54001">
    <property type="entry name" value="Cysteine proteinases"/>
    <property type="match status" value="1"/>
</dbReference>
<dbReference type="PROSITE" id="PS00972">
    <property type="entry name" value="USP_1"/>
    <property type="match status" value="1"/>
</dbReference>
<dbReference type="PROSITE" id="PS00973">
    <property type="entry name" value="USP_2"/>
    <property type="match status" value="1"/>
</dbReference>
<dbReference type="PROSITE" id="PS50235">
    <property type="entry name" value="USP_3"/>
    <property type="match status" value="1"/>
</dbReference>
<evidence type="ECO:0000250" key="1"/>
<evidence type="ECO:0000255" key="2">
    <source>
        <dbReference type="PROSITE-ProRule" id="PRU10092"/>
    </source>
</evidence>
<evidence type="ECO:0000255" key="3">
    <source>
        <dbReference type="PROSITE-ProRule" id="PRU10093"/>
    </source>
</evidence>
<evidence type="ECO:0000256" key="4">
    <source>
        <dbReference type="SAM" id="MobiDB-lite"/>
    </source>
</evidence>
<evidence type="ECO:0000305" key="5"/>
<accession>C9JVI0</accession>
<organism>
    <name type="scientific">Homo sapiens</name>
    <name type="common">Human</name>
    <dbReference type="NCBI Taxonomy" id="9606"/>
    <lineage>
        <taxon>Eukaryota</taxon>
        <taxon>Metazoa</taxon>
        <taxon>Chordata</taxon>
        <taxon>Craniata</taxon>
        <taxon>Vertebrata</taxon>
        <taxon>Euteleostomi</taxon>
        <taxon>Mammalia</taxon>
        <taxon>Eutheria</taxon>
        <taxon>Euarchontoglires</taxon>
        <taxon>Primates</taxon>
        <taxon>Haplorrhini</taxon>
        <taxon>Catarrhini</taxon>
        <taxon>Hominidae</taxon>
        <taxon>Homo</taxon>
    </lineage>
</organism>
<comment type="function">
    <text evidence="1">Deubiquitinating enzyme that removes conjugated ubiquitin from specific proteins to regulate different cellular processes that may include cell proliferation, progression through the cell cycle, apoptosis, cell migration, and the cellular response to viral infection.</text>
</comment>
<comment type="catalytic activity">
    <reaction>
        <text>Thiol-dependent hydrolysis of ester, thioester, amide, peptide and isopeptide bonds formed by the C-terminal Gly of ubiquitin (a 76-residue protein attached to proteins as an intracellular targeting signal).</text>
        <dbReference type="EC" id="3.4.19.12"/>
    </reaction>
</comment>
<comment type="subcellular location">
    <subcellularLocation>
        <location evidence="1">Nucleus</location>
    </subcellularLocation>
    <subcellularLocation>
        <location evidence="1">Endoplasmic reticulum</location>
    </subcellularLocation>
</comment>
<comment type="similarity">
    <text evidence="5">Belongs to the peptidase C19 family. USP17 subfamily.</text>
</comment>
<comment type="caution">
    <text evidence="5">The RS447 megasatellite DNA is a highly polymorphic conserved tandem repetitive sequence which contains a copy of the USP17 gene. It is present with an interindividual variation in copy number, ranging from 20 to 103, and can be found in the genome on chromosome 4 and chromosome 8. The high similarity between the UPS17-like genes makes it impossible to specifically assign data to a particular gene of the family. Oligonucleotides designed in RNAi experiments are for instance not specific for a given UPS17-like gene.</text>
</comment>
<protein>
    <recommendedName>
        <fullName>Ubiquitin carboxyl-terminal hydrolase 17-like protein 11</fullName>
        <ecNumber>3.4.19.12</ecNumber>
    </recommendedName>
</protein>
<gene>
    <name type="primary">USP17L11</name>
</gene>